<dbReference type="EMBL" id="CP000255">
    <property type="protein sequence ID" value="ABD20497.1"/>
    <property type="molecule type" value="Genomic_DNA"/>
</dbReference>
<dbReference type="RefSeq" id="WP_000349655.1">
    <property type="nucleotide sequence ID" value="NZ_CP027476.1"/>
</dbReference>
<dbReference type="SMR" id="Q2FF18"/>
<dbReference type="KEGG" id="saa:SAUSA300_2064"/>
<dbReference type="HOGENOM" id="CLU_041018_2_3_9"/>
<dbReference type="OMA" id="GFFWAAF"/>
<dbReference type="Proteomes" id="UP000001939">
    <property type="component" value="Chromosome"/>
</dbReference>
<dbReference type="GO" id="GO:0005886">
    <property type="term" value="C:plasma membrane"/>
    <property type="evidence" value="ECO:0007669"/>
    <property type="project" value="UniProtKB-SubCell"/>
</dbReference>
<dbReference type="GO" id="GO:0045259">
    <property type="term" value="C:proton-transporting ATP synthase complex"/>
    <property type="evidence" value="ECO:0007669"/>
    <property type="project" value="UniProtKB-KW"/>
</dbReference>
<dbReference type="GO" id="GO:0046933">
    <property type="term" value="F:proton-transporting ATP synthase activity, rotational mechanism"/>
    <property type="evidence" value="ECO:0007669"/>
    <property type="project" value="UniProtKB-UniRule"/>
</dbReference>
<dbReference type="GO" id="GO:0042777">
    <property type="term" value="P:proton motive force-driven plasma membrane ATP synthesis"/>
    <property type="evidence" value="ECO:0007669"/>
    <property type="project" value="TreeGrafter"/>
</dbReference>
<dbReference type="CDD" id="cd00310">
    <property type="entry name" value="ATP-synt_Fo_a_6"/>
    <property type="match status" value="1"/>
</dbReference>
<dbReference type="FunFam" id="1.20.120.220:FF:000005">
    <property type="entry name" value="ATP synthase subunit a"/>
    <property type="match status" value="1"/>
</dbReference>
<dbReference type="Gene3D" id="1.20.120.220">
    <property type="entry name" value="ATP synthase, F0 complex, subunit A"/>
    <property type="match status" value="1"/>
</dbReference>
<dbReference type="HAMAP" id="MF_01393">
    <property type="entry name" value="ATP_synth_a_bact"/>
    <property type="match status" value="1"/>
</dbReference>
<dbReference type="InterPro" id="IPR045082">
    <property type="entry name" value="ATP_syn_F0_a_bact/chloroplast"/>
</dbReference>
<dbReference type="InterPro" id="IPR000568">
    <property type="entry name" value="ATP_synth_F0_asu"/>
</dbReference>
<dbReference type="InterPro" id="IPR023011">
    <property type="entry name" value="ATP_synth_F0_asu_AS"/>
</dbReference>
<dbReference type="InterPro" id="IPR035908">
    <property type="entry name" value="F0_ATP_A_sf"/>
</dbReference>
<dbReference type="NCBIfam" id="TIGR01131">
    <property type="entry name" value="ATP_synt_6_or_A"/>
    <property type="match status" value="1"/>
</dbReference>
<dbReference type="NCBIfam" id="NF004479">
    <property type="entry name" value="PRK05815.1-4"/>
    <property type="match status" value="1"/>
</dbReference>
<dbReference type="PANTHER" id="PTHR42823">
    <property type="entry name" value="ATP SYNTHASE SUBUNIT A, CHLOROPLASTIC"/>
    <property type="match status" value="1"/>
</dbReference>
<dbReference type="PANTHER" id="PTHR42823:SF3">
    <property type="entry name" value="ATP SYNTHASE SUBUNIT A, CHLOROPLASTIC"/>
    <property type="match status" value="1"/>
</dbReference>
<dbReference type="Pfam" id="PF00119">
    <property type="entry name" value="ATP-synt_A"/>
    <property type="match status" value="1"/>
</dbReference>
<dbReference type="PRINTS" id="PR00123">
    <property type="entry name" value="ATPASEA"/>
</dbReference>
<dbReference type="SUPFAM" id="SSF81336">
    <property type="entry name" value="F1F0 ATP synthase subunit A"/>
    <property type="match status" value="1"/>
</dbReference>
<dbReference type="PROSITE" id="PS00449">
    <property type="entry name" value="ATPASE_A"/>
    <property type="match status" value="1"/>
</dbReference>
<comment type="function">
    <text evidence="1">Key component of the proton channel; it plays a direct role in the translocation of protons across the membrane.</text>
</comment>
<comment type="subunit">
    <text evidence="1">F-type ATPases have 2 components, CF(1) - the catalytic core - and CF(0) - the membrane proton channel. CF(1) has five subunits: alpha(3), beta(3), gamma(1), delta(1), epsilon(1). CF(0) has three main subunits: a(1), b(2) and c(9-12). The alpha and beta chains form an alternating ring which encloses part of the gamma chain. CF(1) is attached to CF(0) by a central stalk formed by the gamma and epsilon chains, while a peripheral stalk is formed by the delta and b chains.</text>
</comment>
<comment type="subcellular location">
    <subcellularLocation>
        <location evidence="1">Cell membrane</location>
        <topology evidence="1">Multi-pass membrane protein</topology>
    </subcellularLocation>
</comment>
<comment type="similarity">
    <text evidence="1">Belongs to the ATPase A chain family.</text>
</comment>
<sequence length="242" mass="27630">MDHKSPLVSWNLFGFDIVFNLSSILMILVTAFLVFLLAIICTRNLKKRPTGKQNFVEWIFDFVRGIIEGNMAWKKGGQFHFLAVTLILYIFIANMLGLPFSIVTKDHTLWWKSPTADATVTLTLSTTIILLTHFYGIKMRGTKQYLKGYVQPFWPLAIINVFEEFTSTLTLGLRLYGNIFAGEILLTLLAGLFFNEPAWGWIISIPGLIVWQAFSIFVGTIQAYIFIMLSMVYMSHKVADEH</sequence>
<gene>
    <name evidence="1" type="primary">atpB</name>
    <name type="ordered locus">SAUSA300_2064</name>
</gene>
<accession>Q2FF18</accession>
<name>ATP6_STAA3</name>
<organism>
    <name type="scientific">Staphylococcus aureus (strain USA300)</name>
    <dbReference type="NCBI Taxonomy" id="367830"/>
    <lineage>
        <taxon>Bacteria</taxon>
        <taxon>Bacillati</taxon>
        <taxon>Bacillota</taxon>
        <taxon>Bacilli</taxon>
        <taxon>Bacillales</taxon>
        <taxon>Staphylococcaceae</taxon>
        <taxon>Staphylococcus</taxon>
    </lineage>
</organism>
<reference key="1">
    <citation type="journal article" date="2006" name="Lancet">
        <title>Complete genome sequence of USA300, an epidemic clone of community-acquired meticillin-resistant Staphylococcus aureus.</title>
        <authorList>
            <person name="Diep B.A."/>
            <person name="Gill S.R."/>
            <person name="Chang R.F."/>
            <person name="Phan T.H."/>
            <person name="Chen J.H."/>
            <person name="Davidson M.G."/>
            <person name="Lin F."/>
            <person name="Lin J."/>
            <person name="Carleton H.A."/>
            <person name="Mongodin E.F."/>
            <person name="Sensabaugh G.F."/>
            <person name="Perdreau-Remington F."/>
        </authorList>
    </citation>
    <scope>NUCLEOTIDE SEQUENCE [LARGE SCALE GENOMIC DNA]</scope>
    <source>
        <strain>USA300</strain>
    </source>
</reference>
<keyword id="KW-0066">ATP synthesis</keyword>
<keyword id="KW-1003">Cell membrane</keyword>
<keyword id="KW-0138">CF(0)</keyword>
<keyword id="KW-0375">Hydrogen ion transport</keyword>
<keyword id="KW-0406">Ion transport</keyword>
<keyword id="KW-0472">Membrane</keyword>
<keyword id="KW-0812">Transmembrane</keyword>
<keyword id="KW-1133">Transmembrane helix</keyword>
<keyword id="KW-0813">Transport</keyword>
<proteinExistence type="inferred from homology"/>
<evidence type="ECO:0000255" key="1">
    <source>
        <dbReference type="HAMAP-Rule" id="MF_01393"/>
    </source>
</evidence>
<feature type="chain" id="PRO_1000145306" description="ATP synthase subunit a">
    <location>
        <begin position="1"/>
        <end position="242"/>
    </location>
</feature>
<feature type="transmembrane region" description="Helical" evidence="1">
    <location>
        <begin position="21"/>
        <end position="41"/>
    </location>
</feature>
<feature type="transmembrane region" description="Helical" evidence="1">
    <location>
        <begin position="83"/>
        <end position="103"/>
    </location>
</feature>
<feature type="transmembrane region" description="Helical" evidence="1">
    <location>
        <begin position="117"/>
        <end position="137"/>
    </location>
</feature>
<feature type="transmembrane region" description="Helical" evidence="1">
    <location>
        <begin position="175"/>
        <end position="195"/>
    </location>
</feature>
<feature type="transmembrane region" description="Helical" evidence="1">
    <location>
        <begin position="198"/>
        <end position="218"/>
    </location>
</feature>
<protein>
    <recommendedName>
        <fullName evidence="1">ATP synthase subunit a</fullName>
    </recommendedName>
    <alternativeName>
        <fullName evidence="1">ATP synthase F0 sector subunit a</fullName>
    </alternativeName>
    <alternativeName>
        <fullName evidence="1">F-ATPase subunit 6</fullName>
    </alternativeName>
</protein>